<gene>
    <name evidence="1" type="primary">mnmG</name>
    <name evidence="1" type="synonym">gidA</name>
    <name type="ordered locus">Psyc_1240</name>
</gene>
<feature type="chain" id="PRO_1000016651" description="tRNA uridine 5-carboxymethylaminomethyl modification enzyme MnmG">
    <location>
        <begin position="1"/>
        <end position="632"/>
    </location>
</feature>
<feature type="binding site" evidence="1">
    <location>
        <begin position="13"/>
        <end position="18"/>
    </location>
    <ligand>
        <name>FAD</name>
        <dbReference type="ChEBI" id="CHEBI:57692"/>
    </ligand>
</feature>
<feature type="binding site" evidence="1">
    <location>
        <begin position="273"/>
        <end position="287"/>
    </location>
    <ligand>
        <name>NAD(+)</name>
        <dbReference type="ChEBI" id="CHEBI:57540"/>
    </ligand>
</feature>
<name>MNMG_PSYA2</name>
<proteinExistence type="inferred from homology"/>
<evidence type="ECO:0000255" key="1">
    <source>
        <dbReference type="HAMAP-Rule" id="MF_00129"/>
    </source>
</evidence>
<organism>
    <name type="scientific">Psychrobacter arcticus (strain DSM 17307 / VKM B-2377 / 273-4)</name>
    <dbReference type="NCBI Taxonomy" id="259536"/>
    <lineage>
        <taxon>Bacteria</taxon>
        <taxon>Pseudomonadati</taxon>
        <taxon>Pseudomonadota</taxon>
        <taxon>Gammaproteobacteria</taxon>
        <taxon>Moraxellales</taxon>
        <taxon>Moraxellaceae</taxon>
        <taxon>Psychrobacter</taxon>
    </lineage>
</organism>
<accession>Q4FSB8</accession>
<keyword id="KW-0963">Cytoplasm</keyword>
<keyword id="KW-0274">FAD</keyword>
<keyword id="KW-0285">Flavoprotein</keyword>
<keyword id="KW-0520">NAD</keyword>
<keyword id="KW-1185">Reference proteome</keyword>
<keyword id="KW-0819">tRNA processing</keyword>
<comment type="function">
    <text evidence="1">NAD-binding protein involved in the addition of a carboxymethylaminomethyl (cmnm) group at the wobble position (U34) of certain tRNAs, forming tRNA-cmnm(5)s(2)U34.</text>
</comment>
<comment type="cofactor">
    <cofactor evidence="1">
        <name>FAD</name>
        <dbReference type="ChEBI" id="CHEBI:57692"/>
    </cofactor>
</comment>
<comment type="subunit">
    <text evidence="1">Homodimer. Heterotetramer of two MnmE and two MnmG subunits.</text>
</comment>
<comment type="subcellular location">
    <subcellularLocation>
        <location evidence="1">Cytoplasm</location>
    </subcellularLocation>
</comment>
<comment type="similarity">
    <text evidence="1">Belongs to the MnmG family.</text>
</comment>
<protein>
    <recommendedName>
        <fullName evidence="1">tRNA uridine 5-carboxymethylaminomethyl modification enzyme MnmG</fullName>
    </recommendedName>
    <alternativeName>
        <fullName evidence="1">Glucose-inhibited division protein A</fullName>
    </alternativeName>
</protein>
<sequence>MQYPKNYDVVVIGGGHAGTEAALAAARMGAQTLLLTHNIETLGQMSCNPAIGGIGKSHLVREIDALGGAMALATDKSGIQFRVLNSRKGAAVRATRAQADRILYKAAIRHTLENQPNLDIFQQAADDILVENGRATAVVTATGIIFNTQTVVLTSGTFLGGVIHIGLESSKGGRAGDQPSIKLADRLRELKLPVGRLKTGTPARIDARSVDFSVMAVQPGDTPLPVMSYMGDVSMHPEQVNCYITHTNARTHDIIRENLDRSPMFSGKIEGVGPRYCPSIEDKIHRFADKDSHQIFIEPEGLTTHELYPNGISTSLPFDVQLEFIHSMKGLENAHITRPGYAIEYDYFDPQNLKPTLETKSIDRLYFAGQINGTTGYEEAGVQGLLAGTNAALVTCENSEFDVWTPRRDEAYLGVLVDDLITHGTTEPYRMFTSRAEYRLLLREDNADQRLTETGRKLGLVDDVRWQAYEEKMEAIASETSRLKDIWATPINALGAQVTAQTGEVLSKESTAYDLLKRPQIHFNDIAAITGSEVDSQVGEQIEISVKYAGYIDRQQEDIDQMKRLENTALPMDFDYSVVSGLSNEIVQKLAQVRPSTLAQAGRISGVTPAAIQLLAMTVKKQKKVQAALNAS</sequence>
<dbReference type="EMBL" id="CP000082">
    <property type="protein sequence ID" value="AAZ19090.1"/>
    <property type="molecule type" value="Genomic_DNA"/>
</dbReference>
<dbReference type="RefSeq" id="WP_011280512.1">
    <property type="nucleotide sequence ID" value="NC_007204.1"/>
</dbReference>
<dbReference type="SMR" id="Q4FSB8"/>
<dbReference type="STRING" id="259536.Psyc_1240"/>
<dbReference type="KEGG" id="par:Psyc_1240"/>
<dbReference type="eggNOG" id="COG0445">
    <property type="taxonomic scope" value="Bacteria"/>
</dbReference>
<dbReference type="HOGENOM" id="CLU_007831_2_2_6"/>
<dbReference type="OrthoDB" id="9815560at2"/>
<dbReference type="Proteomes" id="UP000000546">
    <property type="component" value="Chromosome"/>
</dbReference>
<dbReference type="GO" id="GO:0005829">
    <property type="term" value="C:cytosol"/>
    <property type="evidence" value="ECO:0007669"/>
    <property type="project" value="TreeGrafter"/>
</dbReference>
<dbReference type="GO" id="GO:0050660">
    <property type="term" value="F:flavin adenine dinucleotide binding"/>
    <property type="evidence" value="ECO:0007669"/>
    <property type="project" value="UniProtKB-UniRule"/>
</dbReference>
<dbReference type="GO" id="GO:0030488">
    <property type="term" value="P:tRNA methylation"/>
    <property type="evidence" value="ECO:0007669"/>
    <property type="project" value="TreeGrafter"/>
</dbReference>
<dbReference type="GO" id="GO:0002098">
    <property type="term" value="P:tRNA wobble uridine modification"/>
    <property type="evidence" value="ECO:0007669"/>
    <property type="project" value="InterPro"/>
</dbReference>
<dbReference type="FunFam" id="1.10.10.1800:FF:000001">
    <property type="entry name" value="tRNA uridine 5-carboxymethylaminomethyl modification enzyme MnmG"/>
    <property type="match status" value="1"/>
</dbReference>
<dbReference type="FunFam" id="1.10.150.570:FF:000001">
    <property type="entry name" value="tRNA uridine 5-carboxymethylaminomethyl modification enzyme MnmG"/>
    <property type="match status" value="1"/>
</dbReference>
<dbReference type="FunFam" id="3.50.50.60:FF:000002">
    <property type="entry name" value="tRNA uridine 5-carboxymethylaminomethyl modification enzyme MnmG"/>
    <property type="match status" value="1"/>
</dbReference>
<dbReference type="FunFam" id="3.50.50.60:FF:000010">
    <property type="entry name" value="tRNA uridine 5-carboxymethylaminomethyl modification enzyme MnmG"/>
    <property type="match status" value="1"/>
</dbReference>
<dbReference type="Gene3D" id="3.50.50.60">
    <property type="entry name" value="FAD/NAD(P)-binding domain"/>
    <property type="match status" value="2"/>
</dbReference>
<dbReference type="Gene3D" id="1.10.150.570">
    <property type="entry name" value="GidA associated domain, C-terminal subdomain"/>
    <property type="match status" value="1"/>
</dbReference>
<dbReference type="Gene3D" id="1.10.10.1800">
    <property type="entry name" value="tRNA uridine 5-carboxymethylaminomethyl modification enzyme MnmG/GidA"/>
    <property type="match status" value="1"/>
</dbReference>
<dbReference type="HAMAP" id="MF_00129">
    <property type="entry name" value="MnmG_GidA"/>
    <property type="match status" value="1"/>
</dbReference>
<dbReference type="InterPro" id="IPR036188">
    <property type="entry name" value="FAD/NAD-bd_sf"/>
</dbReference>
<dbReference type="InterPro" id="IPR049312">
    <property type="entry name" value="GIDA_C_N"/>
</dbReference>
<dbReference type="InterPro" id="IPR004416">
    <property type="entry name" value="MnmG"/>
</dbReference>
<dbReference type="InterPro" id="IPR002218">
    <property type="entry name" value="MnmG-rel"/>
</dbReference>
<dbReference type="InterPro" id="IPR020595">
    <property type="entry name" value="MnmG-rel_CS"/>
</dbReference>
<dbReference type="InterPro" id="IPR026904">
    <property type="entry name" value="MnmG_C"/>
</dbReference>
<dbReference type="InterPro" id="IPR047001">
    <property type="entry name" value="MnmG_C_subdom"/>
</dbReference>
<dbReference type="InterPro" id="IPR044920">
    <property type="entry name" value="MnmG_C_subdom_sf"/>
</dbReference>
<dbReference type="InterPro" id="IPR040131">
    <property type="entry name" value="MnmG_N"/>
</dbReference>
<dbReference type="NCBIfam" id="TIGR00136">
    <property type="entry name" value="mnmG_gidA"/>
    <property type="match status" value="1"/>
</dbReference>
<dbReference type="PANTHER" id="PTHR11806">
    <property type="entry name" value="GLUCOSE INHIBITED DIVISION PROTEIN A"/>
    <property type="match status" value="1"/>
</dbReference>
<dbReference type="PANTHER" id="PTHR11806:SF0">
    <property type="entry name" value="PROTEIN MTO1 HOMOLOG, MITOCHONDRIAL"/>
    <property type="match status" value="1"/>
</dbReference>
<dbReference type="Pfam" id="PF01134">
    <property type="entry name" value="GIDA"/>
    <property type="match status" value="1"/>
</dbReference>
<dbReference type="Pfam" id="PF21680">
    <property type="entry name" value="GIDA_C_1st"/>
    <property type="match status" value="1"/>
</dbReference>
<dbReference type="Pfam" id="PF13932">
    <property type="entry name" value="SAM_GIDA_C"/>
    <property type="match status" value="1"/>
</dbReference>
<dbReference type="SMART" id="SM01228">
    <property type="entry name" value="GIDA_assoc_3"/>
    <property type="match status" value="1"/>
</dbReference>
<dbReference type="SUPFAM" id="SSF51905">
    <property type="entry name" value="FAD/NAD(P)-binding domain"/>
    <property type="match status" value="1"/>
</dbReference>
<dbReference type="PROSITE" id="PS01280">
    <property type="entry name" value="GIDA_1"/>
    <property type="match status" value="1"/>
</dbReference>
<reference key="1">
    <citation type="journal article" date="2010" name="Appl. Environ. Microbiol.">
        <title>The genome sequence of Psychrobacter arcticus 273-4, a psychroactive Siberian permafrost bacterium, reveals mechanisms for adaptation to low-temperature growth.</title>
        <authorList>
            <person name="Ayala-del-Rio H.L."/>
            <person name="Chain P.S."/>
            <person name="Grzymski J.J."/>
            <person name="Ponder M.A."/>
            <person name="Ivanova N."/>
            <person name="Bergholz P.W."/>
            <person name="Di Bartolo G."/>
            <person name="Hauser L."/>
            <person name="Land M."/>
            <person name="Bakermans C."/>
            <person name="Rodrigues D."/>
            <person name="Klappenbach J."/>
            <person name="Zarka D."/>
            <person name="Larimer F."/>
            <person name="Richardson P."/>
            <person name="Murray A."/>
            <person name="Thomashow M."/>
            <person name="Tiedje J.M."/>
        </authorList>
    </citation>
    <scope>NUCLEOTIDE SEQUENCE [LARGE SCALE GENOMIC DNA]</scope>
    <source>
        <strain>DSM 17307 / VKM B-2377 / 273-4</strain>
    </source>
</reference>